<proteinExistence type="inferred from homology"/>
<gene>
    <name type="primary">DBP5</name>
    <name type="ordered locus">DEHA2D17072g</name>
</gene>
<evidence type="ECO:0000250" key="1"/>
<evidence type="ECO:0000255" key="2">
    <source>
        <dbReference type="PROSITE-ProRule" id="PRU00541"/>
    </source>
</evidence>
<evidence type="ECO:0000255" key="3">
    <source>
        <dbReference type="PROSITE-ProRule" id="PRU00542"/>
    </source>
</evidence>
<evidence type="ECO:0000256" key="4">
    <source>
        <dbReference type="SAM" id="MobiDB-lite"/>
    </source>
</evidence>
<evidence type="ECO:0000305" key="5"/>
<keyword id="KW-0067">ATP-binding</keyword>
<keyword id="KW-0963">Cytoplasm</keyword>
<keyword id="KW-0347">Helicase</keyword>
<keyword id="KW-0378">Hydrolase</keyword>
<keyword id="KW-0472">Membrane</keyword>
<keyword id="KW-0509">mRNA transport</keyword>
<keyword id="KW-0906">Nuclear pore complex</keyword>
<keyword id="KW-0547">Nucleotide-binding</keyword>
<keyword id="KW-0539">Nucleus</keyword>
<keyword id="KW-0653">Protein transport</keyword>
<keyword id="KW-1185">Reference proteome</keyword>
<keyword id="KW-0694">RNA-binding</keyword>
<keyword id="KW-0811">Translocation</keyword>
<keyword id="KW-0813">Transport</keyword>
<accession>Q6BRE4</accession>
<organism>
    <name type="scientific">Debaryomyces hansenii (strain ATCC 36239 / CBS 767 / BCRC 21394 / JCM 1990 / NBRC 0083 / IGC 2968)</name>
    <name type="common">Yeast</name>
    <name type="synonym">Torulaspora hansenii</name>
    <dbReference type="NCBI Taxonomy" id="284592"/>
    <lineage>
        <taxon>Eukaryota</taxon>
        <taxon>Fungi</taxon>
        <taxon>Dikarya</taxon>
        <taxon>Ascomycota</taxon>
        <taxon>Saccharomycotina</taxon>
        <taxon>Pichiomycetes</taxon>
        <taxon>Debaryomycetaceae</taxon>
        <taxon>Debaryomyces</taxon>
    </lineage>
</organism>
<name>DBP5_DEBHA</name>
<protein>
    <recommendedName>
        <fullName>ATP-dependent RNA helicase DBP5</fullName>
        <ecNumber>3.6.4.13</ecNumber>
    </recommendedName>
</protein>
<feature type="chain" id="PRO_0000232222" description="ATP-dependent RNA helicase DBP5">
    <location>
        <begin position="1"/>
        <end position="493"/>
    </location>
</feature>
<feature type="domain" description="Helicase ATP-binding" evidence="2">
    <location>
        <begin position="136"/>
        <end position="303"/>
    </location>
</feature>
<feature type="domain" description="Helicase C-terminal" evidence="3">
    <location>
        <begin position="331"/>
        <end position="491"/>
    </location>
</feature>
<feature type="region of interest" description="Disordered" evidence="4">
    <location>
        <begin position="1"/>
        <end position="75"/>
    </location>
</feature>
<feature type="short sequence motif" description="Q motif">
    <location>
        <begin position="103"/>
        <end position="131"/>
    </location>
</feature>
<feature type="short sequence motif" description="DEAD box">
    <location>
        <begin position="250"/>
        <end position="253"/>
    </location>
</feature>
<feature type="compositionally biased region" description="Basic and acidic residues" evidence="4">
    <location>
        <begin position="1"/>
        <end position="10"/>
    </location>
</feature>
<feature type="compositionally biased region" description="Basic and acidic residues" evidence="4">
    <location>
        <begin position="34"/>
        <end position="70"/>
    </location>
</feature>
<feature type="binding site" evidence="2">
    <location>
        <begin position="149"/>
        <end position="156"/>
    </location>
    <ligand>
        <name>ATP</name>
        <dbReference type="ChEBI" id="CHEBI:30616"/>
    </ligand>
</feature>
<sequence>MSKEDTRVESDAAELLSSLSLDKKEQTEATVPKVDAKEDKSNDESKQTIKPASTEESKPADVKDATKSEEQEAESNLIKSSYEVKVKLADLQADPNSPLYSVKSFEELGLSSELLKGLYAMKFNKPSKIQEKALPLLISNPPKNMIGQSQSGTGKTAAFSLTMLSRVDESDPNTQCICLAPARELARQTLEVITTMSKFTKITSQLIVPDAMQRGQSTCAHVLVGTPGTLLDLIRRKLINTSKVKVFVLDEADNMLESQGLGDQCVRVKRTLPKATQLVLFSATFPDEVRKYAEKFVPNANSLELKQEELNVEGIKQLYMDCDSANHKFEVLSELYGLLTIGSSIIFVKTKDTANILYAKMKKEGHKCSILHAGLETSERDRLIDDFREGRSKVLITTNVLARGIDIASVSMVVNYDLPVDQKGAPDPSTYLHRIGRTGRFGRVGVSISFVHDQKSYQDLMAIRSYFGNIEMTRVPTDDWDEVEKIVKKVIKN</sequence>
<comment type="function">
    <text evidence="1">ATP-dependent RNA helicase associated with the nuclear pore complex and essential for mRNA export from the nucleus. May participate in a terminal step of mRNA export through the removal of proteins that accompany mRNA through the nucleopore complex. May also be involved in early transcription (By similarity).</text>
</comment>
<comment type="catalytic activity">
    <reaction>
        <text>ATP + H2O = ADP + phosphate + H(+)</text>
        <dbReference type="Rhea" id="RHEA:13065"/>
        <dbReference type="ChEBI" id="CHEBI:15377"/>
        <dbReference type="ChEBI" id="CHEBI:15378"/>
        <dbReference type="ChEBI" id="CHEBI:30616"/>
        <dbReference type="ChEBI" id="CHEBI:43474"/>
        <dbReference type="ChEBI" id="CHEBI:456216"/>
        <dbReference type="EC" id="3.6.4.13"/>
    </reaction>
</comment>
<comment type="subunit">
    <text evidence="1">Associates with the nuclear pore complex.</text>
</comment>
<comment type="subcellular location">
    <subcellularLocation>
        <location evidence="1">Cytoplasm</location>
    </subcellularLocation>
    <subcellularLocation>
        <location>Nucleus</location>
        <location>Nuclear pore complex</location>
    </subcellularLocation>
    <subcellularLocation>
        <location evidence="1">Nucleus membrane</location>
        <topology evidence="1">Peripheral membrane protein</topology>
        <orientation evidence="1">Cytoplasmic side</orientation>
    </subcellularLocation>
    <text evidence="1">Nuclear pore complex cytoplasmic fibrils.</text>
</comment>
<comment type="domain">
    <text>The Q motif is unique to and characteristic of the DEAD box family of RNA helicases and controls ATP binding and hydrolysis.</text>
</comment>
<comment type="similarity">
    <text evidence="5">Belongs to the DEAD box helicase family. DDX19/DBP5 subfamily.</text>
</comment>
<dbReference type="EC" id="3.6.4.13"/>
<dbReference type="EMBL" id="CR382136">
    <property type="protein sequence ID" value="CAG87398.1"/>
    <property type="molecule type" value="Genomic_DNA"/>
</dbReference>
<dbReference type="RefSeq" id="XP_459226.1">
    <property type="nucleotide sequence ID" value="XM_459226.1"/>
</dbReference>
<dbReference type="SMR" id="Q6BRE4"/>
<dbReference type="FunCoup" id="Q6BRE4">
    <property type="interactions" value="813"/>
</dbReference>
<dbReference type="STRING" id="284592.Q6BRE4"/>
<dbReference type="GeneID" id="2901091"/>
<dbReference type="KEGG" id="dha:DEHA2D17072g"/>
<dbReference type="VEuPathDB" id="FungiDB:DEHA2D17072g"/>
<dbReference type="eggNOG" id="KOG0332">
    <property type="taxonomic scope" value="Eukaryota"/>
</dbReference>
<dbReference type="HOGENOM" id="CLU_003041_1_0_1"/>
<dbReference type="InParanoid" id="Q6BRE4"/>
<dbReference type="OMA" id="IAAETRW"/>
<dbReference type="OrthoDB" id="10265785at2759"/>
<dbReference type="Proteomes" id="UP000000599">
    <property type="component" value="Chromosome D"/>
</dbReference>
<dbReference type="GO" id="GO:0005934">
    <property type="term" value="C:cellular bud tip"/>
    <property type="evidence" value="ECO:0007669"/>
    <property type="project" value="EnsemblFungi"/>
</dbReference>
<dbReference type="GO" id="GO:0010494">
    <property type="term" value="C:cytoplasmic stress granule"/>
    <property type="evidence" value="ECO:0007669"/>
    <property type="project" value="EnsemblFungi"/>
</dbReference>
<dbReference type="GO" id="GO:0031965">
    <property type="term" value="C:nuclear membrane"/>
    <property type="evidence" value="ECO:0007669"/>
    <property type="project" value="UniProtKB-SubCell"/>
</dbReference>
<dbReference type="GO" id="GO:0044614">
    <property type="term" value="C:nuclear pore cytoplasmic filaments"/>
    <property type="evidence" value="ECO:0007669"/>
    <property type="project" value="EnsemblFungi"/>
</dbReference>
<dbReference type="GO" id="GO:0005524">
    <property type="term" value="F:ATP binding"/>
    <property type="evidence" value="ECO:0007669"/>
    <property type="project" value="UniProtKB-KW"/>
</dbReference>
<dbReference type="GO" id="GO:0016887">
    <property type="term" value="F:ATP hydrolysis activity"/>
    <property type="evidence" value="ECO:0007669"/>
    <property type="project" value="RHEA"/>
</dbReference>
<dbReference type="GO" id="GO:0000822">
    <property type="term" value="F:inositol hexakisphosphate binding"/>
    <property type="evidence" value="ECO:0007669"/>
    <property type="project" value="EnsemblFungi"/>
</dbReference>
<dbReference type="GO" id="GO:0003723">
    <property type="term" value="F:RNA binding"/>
    <property type="evidence" value="ECO:0007669"/>
    <property type="project" value="UniProtKB-KW"/>
</dbReference>
<dbReference type="GO" id="GO:0003724">
    <property type="term" value="F:RNA helicase activity"/>
    <property type="evidence" value="ECO:0007669"/>
    <property type="project" value="UniProtKB-EC"/>
</dbReference>
<dbReference type="GO" id="GO:0016973">
    <property type="term" value="P:poly(A)+ mRNA export from nucleus"/>
    <property type="evidence" value="ECO:0007669"/>
    <property type="project" value="EnsemblFungi"/>
</dbReference>
<dbReference type="GO" id="GO:0015031">
    <property type="term" value="P:protein transport"/>
    <property type="evidence" value="ECO:0007669"/>
    <property type="project" value="UniProtKB-KW"/>
</dbReference>
<dbReference type="GO" id="GO:0006415">
    <property type="term" value="P:translational termination"/>
    <property type="evidence" value="ECO:0007669"/>
    <property type="project" value="EnsemblFungi"/>
</dbReference>
<dbReference type="GO" id="GO:0006409">
    <property type="term" value="P:tRNA export from nucleus"/>
    <property type="evidence" value="ECO:0007669"/>
    <property type="project" value="EnsemblFungi"/>
</dbReference>
<dbReference type="CDD" id="cd17963">
    <property type="entry name" value="DEADc_DDX19_DDX25"/>
    <property type="match status" value="1"/>
</dbReference>
<dbReference type="CDD" id="cd18787">
    <property type="entry name" value="SF2_C_DEAD"/>
    <property type="match status" value="1"/>
</dbReference>
<dbReference type="FunFam" id="3.40.50.300:FF:000849">
    <property type="entry name" value="ATP-dependent RNA helicase DBP5"/>
    <property type="match status" value="1"/>
</dbReference>
<dbReference type="FunFam" id="3.40.50.300:FF:000318">
    <property type="entry name" value="ATP-dependent RNA helicase DDX19B"/>
    <property type="match status" value="1"/>
</dbReference>
<dbReference type="Gene3D" id="3.40.50.300">
    <property type="entry name" value="P-loop containing nucleotide triphosphate hydrolases"/>
    <property type="match status" value="2"/>
</dbReference>
<dbReference type="InterPro" id="IPR011545">
    <property type="entry name" value="DEAD/DEAH_box_helicase_dom"/>
</dbReference>
<dbReference type="InterPro" id="IPR014001">
    <property type="entry name" value="Helicase_ATP-bd"/>
</dbReference>
<dbReference type="InterPro" id="IPR001650">
    <property type="entry name" value="Helicase_C-like"/>
</dbReference>
<dbReference type="InterPro" id="IPR027417">
    <property type="entry name" value="P-loop_NTPase"/>
</dbReference>
<dbReference type="InterPro" id="IPR000629">
    <property type="entry name" value="RNA-helicase_DEAD-box_CS"/>
</dbReference>
<dbReference type="InterPro" id="IPR014014">
    <property type="entry name" value="RNA_helicase_DEAD_Q_motif"/>
</dbReference>
<dbReference type="PANTHER" id="PTHR47958">
    <property type="entry name" value="ATP-DEPENDENT RNA HELICASE DBP3"/>
    <property type="match status" value="1"/>
</dbReference>
<dbReference type="Pfam" id="PF00270">
    <property type="entry name" value="DEAD"/>
    <property type="match status" value="1"/>
</dbReference>
<dbReference type="Pfam" id="PF00271">
    <property type="entry name" value="Helicase_C"/>
    <property type="match status" value="1"/>
</dbReference>
<dbReference type="SMART" id="SM00487">
    <property type="entry name" value="DEXDc"/>
    <property type="match status" value="1"/>
</dbReference>
<dbReference type="SMART" id="SM00490">
    <property type="entry name" value="HELICc"/>
    <property type="match status" value="1"/>
</dbReference>
<dbReference type="SUPFAM" id="SSF52540">
    <property type="entry name" value="P-loop containing nucleoside triphosphate hydrolases"/>
    <property type="match status" value="1"/>
</dbReference>
<dbReference type="PROSITE" id="PS00039">
    <property type="entry name" value="DEAD_ATP_HELICASE"/>
    <property type="match status" value="1"/>
</dbReference>
<dbReference type="PROSITE" id="PS51192">
    <property type="entry name" value="HELICASE_ATP_BIND_1"/>
    <property type="match status" value="1"/>
</dbReference>
<dbReference type="PROSITE" id="PS51194">
    <property type="entry name" value="HELICASE_CTER"/>
    <property type="match status" value="1"/>
</dbReference>
<dbReference type="PROSITE" id="PS51195">
    <property type="entry name" value="Q_MOTIF"/>
    <property type="match status" value="1"/>
</dbReference>
<reference key="1">
    <citation type="journal article" date="2004" name="Nature">
        <title>Genome evolution in yeasts.</title>
        <authorList>
            <person name="Dujon B."/>
            <person name="Sherman D."/>
            <person name="Fischer G."/>
            <person name="Durrens P."/>
            <person name="Casaregola S."/>
            <person name="Lafontaine I."/>
            <person name="de Montigny J."/>
            <person name="Marck C."/>
            <person name="Neuveglise C."/>
            <person name="Talla E."/>
            <person name="Goffard N."/>
            <person name="Frangeul L."/>
            <person name="Aigle M."/>
            <person name="Anthouard V."/>
            <person name="Babour A."/>
            <person name="Barbe V."/>
            <person name="Barnay S."/>
            <person name="Blanchin S."/>
            <person name="Beckerich J.-M."/>
            <person name="Beyne E."/>
            <person name="Bleykasten C."/>
            <person name="Boisrame A."/>
            <person name="Boyer J."/>
            <person name="Cattolico L."/>
            <person name="Confanioleri F."/>
            <person name="de Daruvar A."/>
            <person name="Despons L."/>
            <person name="Fabre E."/>
            <person name="Fairhead C."/>
            <person name="Ferry-Dumazet H."/>
            <person name="Groppi A."/>
            <person name="Hantraye F."/>
            <person name="Hennequin C."/>
            <person name="Jauniaux N."/>
            <person name="Joyet P."/>
            <person name="Kachouri R."/>
            <person name="Kerrest A."/>
            <person name="Koszul R."/>
            <person name="Lemaire M."/>
            <person name="Lesur I."/>
            <person name="Ma L."/>
            <person name="Muller H."/>
            <person name="Nicaud J.-M."/>
            <person name="Nikolski M."/>
            <person name="Oztas S."/>
            <person name="Ozier-Kalogeropoulos O."/>
            <person name="Pellenz S."/>
            <person name="Potier S."/>
            <person name="Richard G.-F."/>
            <person name="Straub M.-L."/>
            <person name="Suleau A."/>
            <person name="Swennen D."/>
            <person name="Tekaia F."/>
            <person name="Wesolowski-Louvel M."/>
            <person name="Westhof E."/>
            <person name="Wirth B."/>
            <person name="Zeniou-Meyer M."/>
            <person name="Zivanovic Y."/>
            <person name="Bolotin-Fukuhara M."/>
            <person name="Thierry A."/>
            <person name="Bouchier C."/>
            <person name="Caudron B."/>
            <person name="Scarpelli C."/>
            <person name="Gaillardin C."/>
            <person name="Weissenbach J."/>
            <person name="Wincker P."/>
            <person name="Souciet J.-L."/>
        </authorList>
    </citation>
    <scope>NUCLEOTIDE SEQUENCE [LARGE SCALE GENOMIC DNA]</scope>
    <source>
        <strain>ATCC 36239 / CBS 767 / BCRC 21394 / JCM 1990 / NBRC 0083 / IGC 2968</strain>
    </source>
</reference>